<keyword id="KW-0687">Ribonucleoprotein</keyword>
<keyword id="KW-0689">Ribosomal protein</keyword>
<proteinExistence type="inferred from homology"/>
<sequence>MAKATTIKIKLLSTADTGFFYVTKKNSRTMTEKMTKTKYDPIARKHVEFKETKIK</sequence>
<dbReference type="EMBL" id="CP000888">
    <property type="protein sequence ID" value="ACD74084.1"/>
    <property type="molecule type" value="Genomic_DNA"/>
</dbReference>
<dbReference type="RefSeq" id="WP_002966024.1">
    <property type="nucleotide sequence ID" value="NC_010740.1"/>
</dbReference>
<dbReference type="SMR" id="B2SB47"/>
<dbReference type="GeneID" id="97535268"/>
<dbReference type="KEGG" id="bmc:BAbS19_II05890"/>
<dbReference type="HOGENOM" id="CLU_190949_1_1_5"/>
<dbReference type="Proteomes" id="UP000002565">
    <property type="component" value="Chromosome 2"/>
</dbReference>
<dbReference type="GO" id="GO:0022625">
    <property type="term" value="C:cytosolic large ribosomal subunit"/>
    <property type="evidence" value="ECO:0007669"/>
    <property type="project" value="TreeGrafter"/>
</dbReference>
<dbReference type="GO" id="GO:0003735">
    <property type="term" value="F:structural constituent of ribosome"/>
    <property type="evidence" value="ECO:0007669"/>
    <property type="project" value="InterPro"/>
</dbReference>
<dbReference type="GO" id="GO:0006412">
    <property type="term" value="P:translation"/>
    <property type="evidence" value="ECO:0007669"/>
    <property type="project" value="UniProtKB-UniRule"/>
</dbReference>
<dbReference type="Gene3D" id="2.20.28.120">
    <property type="entry name" value="Ribosomal protein L33"/>
    <property type="match status" value="1"/>
</dbReference>
<dbReference type="HAMAP" id="MF_00294">
    <property type="entry name" value="Ribosomal_bL33"/>
    <property type="match status" value="1"/>
</dbReference>
<dbReference type="InterPro" id="IPR001705">
    <property type="entry name" value="Ribosomal_bL33"/>
</dbReference>
<dbReference type="InterPro" id="IPR018264">
    <property type="entry name" value="Ribosomal_bL33_CS"/>
</dbReference>
<dbReference type="InterPro" id="IPR038584">
    <property type="entry name" value="Ribosomal_bL33_sf"/>
</dbReference>
<dbReference type="InterPro" id="IPR011332">
    <property type="entry name" value="Ribosomal_zn-bd"/>
</dbReference>
<dbReference type="NCBIfam" id="NF001860">
    <property type="entry name" value="PRK00595.1"/>
    <property type="match status" value="1"/>
</dbReference>
<dbReference type="NCBIfam" id="TIGR01023">
    <property type="entry name" value="rpmG_bact"/>
    <property type="match status" value="1"/>
</dbReference>
<dbReference type="PANTHER" id="PTHR15238">
    <property type="entry name" value="54S RIBOSOMAL PROTEIN L39, MITOCHONDRIAL"/>
    <property type="match status" value="1"/>
</dbReference>
<dbReference type="PANTHER" id="PTHR15238:SF1">
    <property type="entry name" value="LARGE RIBOSOMAL SUBUNIT PROTEIN BL33M"/>
    <property type="match status" value="1"/>
</dbReference>
<dbReference type="Pfam" id="PF00471">
    <property type="entry name" value="Ribosomal_L33"/>
    <property type="match status" value="1"/>
</dbReference>
<dbReference type="SUPFAM" id="SSF57829">
    <property type="entry name" value="Zn-binding ribosomal proteins"/>
    <property type="match status" value="1"/>
</dbReference>
<dbReference type="PROSITE" id="PS00582">
    <property type="entry name" value="RIBOSOMAL_L33"/>
    <property type="match status" value="1"/>
</dbReference>
<name>RL33_BRUA1</name>
<gene>
    <name evidence="1" type="primary">rpmG</name>
    <name type="ordered locus">BAbS19_II05890</name>
</gene>
<organism>
    <name type="scientific">Brucella abortus (strain S19)</name>
    <dbReference type="NCBI Taxonomy" id="430066"/>
    <lineage>
        <taxon>Bacteria</taxon>
        <taxon>Pseudomonadati</taxon>
        <taxon>Pseudomonadota</taxon>
        <taxon>Alphaproteobacteria</taxon>
        <taxon>Hyphomicrobiales</taxon>
        <taxon>Brucellaceae</taxon>
        <taxon>Brucella/Ochrobactrum group</taxon>
        <taxon>Brucella</taxon>
    </lineage>
</organism>
<reference key="1">
    <citation type="journal article" date="2008" name="PLoS ONE">
        <title>Genome sequence of Brucella abortus vaccine strain S19 compared to virulent strains yields candidate virulence genes.</title>
        <authorList>
            <person name="Crasta O.R."/>
            <person name="Folkerts O."/>
            <person name="Fei Z."/>
            <person name="Mane S.P."/>
            <person name="Evans C."/>
            <person name="Martino-Catt S."/>
            <person name="Bricker B."/>
            <person name="Yu G."/>
            <person name="Du L."/>
            <person name="Sobral B.W."/>
        </authorList>
    </citation>
    <scope>NUCLEOTIDE SEQUENCE [LARGE SCALE GENOMIC DNA]</scope>
    <source>
        <strain>S19</strain>
    </source>
</reference>
<comment type="similarity">
    <text evidence="1">Belongs to the bacterial ribosomal protein bL33 family.</text>
</comment>
<feature type="chain" id="PRO_0000356410" description="Large ribosomal subunit protein bL33">
    <location>
        <begin position="1"/>
        <end position="55"/>
    </location>
</feature>
<protein>
    <recommendedName>
        <fullName evidence="1">Large ribosomal subunit protein bL33</fullName>
    </recommendedName>
    <alternativeName>
        <fullName evidence="2">50S ribosomal protein L33</fullName>
    </alternativeName>
</protein>
<evidence type="ECO:0000255" key="1">
    <source>
        <dbReference type="HAMAP-Rule" id="MF_00294"/>
    </source>
</evidence>
<evidence type="ECO:0000305" key="2"/>
<accession>B2SB47</accession>